<evidence type="ECO:0000250" key="1"/>
<evidence type="ECO:0000255" key="2">
    <source>
        <dbReference type="PROSITE-ProRule" id="PRU00107"/>
    </source>
</evidence>
<evidence type="ECO:0000255" key="3">
    <source>
        <dbReference type="PROSITE-ProRule" id="PRU00140"/>
    </source>
</evidence>
<evidence type="ECO:0000256" key="4">
    <source>
        <dbReference type="SAM" id="MobiDB-lite"/>
    </source>
</evidence>
<evidence type="ECO:0000269" key="5">
    <source>
    </source>
</evidence>
<evidence type="ECO:0000305" key="6"/>
<feature type="chain" id="PRO_0000171984" description="Phytochrome 1">
    <location>
        <begin position="1"/>
        <end position="1123"/>
    </location>
</feature>
<feature type="domain" description="GAF">
    <location>
        <begin position="216"/>
        <end position="395"/>
    </location>
</feature>
<feature type="domain" description="PAS 1" evidence="3">
    <location>
        <begin position="610"/>
        <end position="681"/>
    </location>
</feature>
<feature type="domain" description="PAS 2" evidence="3">
    <location>
        <begin position="744"/>
        <end position="815"/>
    </location>
</feature>
<feature type="domain" description="Histidine kinase" evidence="2">
    <location>
        <begin position="895"/>
        <end position="1115"/>
    </location>
</feature>
<feature type="region of interest" description="Disordered" evidence="4">
    <location>
        <begin position="1"/>
        <end position="20"/>
    </location>
</feature>
<feature type="compositionally biased region" description="Low complexity" evidence="4">
    <location>
        <begin position="1"/>
        <end position="15"/>
    </location>
</feature>
<feature type="binding site" description="covalent" evidence="1">
    <location>
        <position position="321"/>
    </location>
    <ligand>
        <name>phytochromobilin</name>
        <dbReference type="ChEBI" id="CHEBI:189064"/>
    </ligand>
</feature>
<feature type="sequence conflict" description="In Ref. 1; CAA52933." evidence="6" ref="1">
    <original>D</original>
    <variation>N</variation>
    <location>
        <position position="216"/>
    </location>
</feature>
<feature type="sequence conflict" description="In Ref. 1; CAA52933." evidence="6" ref="1">
    <original>L</original>
    <variation>S</variation>
    <location>
        <position position="397"/>
    </location>
</feature>
<feature type="sequence conflict" description="In Ref. 1; CAA52933." evidence="6" ref="1">
    <original>R</original>
    <variation>P</variation>
    <location>
        <position position="448"/>
    </location>
</feature>
<feature type="sequence conflict" description="In Ref. 1; CAA52933." evidence="6" ref="1">
    <original>KD</original>
    <variation>NH</variation>
    <location>
        <begin position="535"/>
        <end position="536"/>
    </location>
</feature>
<feature type="sequence conflict" description="In Ref. 1; CAA52933." evidence="6" ref="1">
    <original>D</original>
    <variation>A</variation>
    <location>
        <position position="584"/>
    </location>
</feature>
<feature type="sequence conflict" description="In Ref. 1; CAA52933." evidence="6" ref="1">
    <original>M</original>
    <variation>H</variation>
    <location>
        <position position="653"/>
    </location>
</feature>
<feature type="sequence conflict" description="In Ref. 1; CAA52933." evidence="6" ref="1">
    <original>NACSSRD</original>
    <variation>DACSSIH</variation>
    <location>
        <begin position="707"/>
        <end position="713"/>
    </location>
</feature>
<feature type="sequence conflict" description="In Ref. 1; CAA52933." evidence="6" ref="1">
    <original>RQ</original>
    <variation>VR</variation>
    <location>
        <begin position="897"/>
        <end position="898"/>
    </location>
</feature>
<feature type="sequence conflict" description="In Ref. 1; CAA52933." evidence="6" ref="1">
    <original>I</original>
    <variation>L</variation>
    <location>
        <position position="907"/>
    </location>
</feature>
<feature type="sequence conflict" description="In Ref. 1; CAA52933." evidence="6" ref="1">
    <original>V</original>
    <variation>S</variation>
    <location>
        <position position="940"/>
    </location>
</feature>
<feature type="sequence conflict" description="In Ref. 1; CAA52933." evidence="6" ref="1">
    <original>M</original>
    <variation>CRSLYSYLLA</variation>
    <location>
        <position position="1123"/>
    </location>
</feature>
<protein>
    <recommendedName>
        <fullName>Phytochrome 1</fullName>
    </recommendedName>
</protein>
<proteinExistence type="evidence at transcript level"/>
<dbReference type="EMBL" id="X75025">
    <property type="protein sequence ID" value="CAA52933.1"/>
    <property type="molecule type" value="mRNA"/>
</dbReference>
<dbReference type="EMBL" id="AB275304">
    <property type="protein sequence ID" value="BAF51707.1"/>
    <property type="molecule type" value="mRNA"/>
</dbReference>
<dbReference type="EMBL" id="DS545122">
    <property type="protein sequence ID" value="EDQ57045.1"/>
    <property type="molecule type" value="Genomic_DNA"/>
</dbReference>
<dbReference type="PIR" id="S37206">
    <property type="entry name" value="S37206"/>
</dbReference>
<dbReference type="RefSeq" id="XP_001778155.1">
    <property type="nucleotide sequence ID" value="XM_001778103.1"/>
</dbReference>
<dbReference type="SMR" id="P36505"/>
<dbReference type="FunCoup" id="P36505">
    <property type="interactions" value="933"/>
</dbReference>
<dbReference type="PaxDb" id="3218-PP1S233_24V6.1"/>
<dbReference type="EnsemblPlants" id="Pp3c25_2610V3.1">
    <property type="protein sequence ID" value="Pp3c25_2610V3.1"/>
    <property type="gene ID" value="Pp3c25_2610"/>
</dbReference>
<dbReference type="EnsemblPlants" id="Pp3c25_2610V3.2">
    <property type="protein sequence ID" value="Pp3c25_2610V3.2"/>
    <property type="gene ID" value="Pp3c25_2610"/>
</dbReference>
<dbReference type="Gramene" id="Pp3c25_2610V3.1">
    <property type="protein sequence ID" value="Pp3c25_2610V3.1"/>
    <property type="gene ID" value="Pp3c25_2610"/>
</dbReference>
<dbReference type="Gramene" id="Pp3c25_2610V3.2">
    <property type="protein sequence ID" value="Pp3c25_2610V3.2"/>
    <property type="gene ID" value="Pp3c25_2610"/>
</dbReference>
<dbReference type="eggNOG" id="ENOG502QRNS">
    <property type="taxonomic scope" value="Eukaryota"/>
</dbReference>
<dbReference type="HOGENOM" id="CLU_010418_0_0_1"/>
<dbReference type="InParanoid" id="P36505"/>
<dbReference type="OrthoDB" id="10266508at2759"/>
<dbReference type="Proteomes" id="UP000006727">
    <property type="component" value="Chromosome 25"/>
</dbReference>
<dbReference type="GO" id="GO:0005737">
    <property type="term" value="C:cytoplasm"/>
    <property type="evidence" value="ECO:0000314"/>
    <property type="project" value="UniProtKB"/>
</dbReference>
<dbReference type="GO" id="GO:0000155">
    <property type="term" value="F:phosphorelay sensor kinase activity"/>
    <property type="evidence" value="ECO:0007669"/>
    <property type="project" value="InterPro"/>
</dbReference>
<dbReference type="GO" id="GO:0009881">
    <property type="term" value="F:photoreceptor activity"/>
    <property type="evidence" value="ECO:0007669"/>
    <property type="project" value="UniProtKB-KW"/>
</dbReference>
<dbReference type="GO" id="GO:0042803">
    <property type="term" value="F:protein homodimerization activity"/>
    <property type="evidence" value="ECO:0007669"/>
    <property type="project" value="InterPro"/>
</dbReference>
<dbReference type="GO" id="GO:0009903">
    <property type="term" value="P:chloroplast avoidance movement"/>
    <property type="evidence" value="ECO:0000314"/>
    <property type="project" value="UniProtKB"/>
</dbReference>
<dbReference type="GO" id="GO:0009584">
    <property type="term" value="P:detection of visible light"/>
    <property type="evidence" value="ECO:0007669"/>
    <property type="project" value="InterPro"/>
</dbReference>
<dbReference type="GO" id="GO:0009585">
    <property type="term" value="P:red, far-red light phototransduction"/>
    <property type="evidence" value="ECO:0007669"/>
    <property type="project" value="InterPro"/>
</dbReference>
<dbReference type="GO" id="GO:0006355">
    <property type="term" value="P:regulation of DNA-templated transcription"/>
    <property type="evidence" value="ECO:0007669"/>
    <property type="project" value="InterPro"/>
</dbReference>
<dbReference type="CDD" id="cd16932">
    <property type="entry name" value="HATPase_Phy-like"/>
    <property type="match status" value="1"/>
</dbReference>
<dbReference type="CDD" id="cd00082">
    <property type="entry name" value="HisKA"/>
    <property type="match status" value="1"/>
</dbReference>
<dbReference type="CDD" id="cd00130">
    <property type="entry name" value="PAS"/>
    <property type="match status" value="2"/>
</dbReference>
<dbReference type="FunFam" id="3.30.450.20:FF:000034">
    <property type="entry name" value="Phytochrome"/>
    <property type="match status" value="1"/>
</dbReference>
<dbReference type="FunFam" id="3.30.450.20:FF:000039">
    <property type="entry name" value="Phytochrome"/>
    <property type="match status" value="1"/>
</dbReference>
<dbReference type="FunFam" id="3.30.450.270:FF:000001">
    <property type="entry name" value="Phytochrome"/>
    <property type="match status" value="1"/>
</dbReference>
<dbReference type="Gene3D" id="1.10.287.130">
    <property type="match status" value="1"/>
</dbReference>
<dbReference type="Gene3D" id="3.30.450.270">
    <property type="match status" value="1"/>
</dbReference>
<dbReference type="Gene3D" id="3.30.450.40">
    <property type="match status" value="1"/>
</dbReference>
<dbReference type="Gene3D" id="3.30.565.10">
    <property type="entry name" value="Histidine kinase-like ATPase, C-terminal domain"/>
    <property type="match status" value="1"/>
</dbReference>
<dbReference type="Gene3D" id="3.30.450.20">
    <property type="entry name" value="PAS domain"/>
    <property type="match status" value="3"/>
</dbReference>
<dbReference type="InterPro" id="IPR003018">
    <property type="entry name" value="GAF"/>
</dbReference>
<dbReference type="InterPro" id="IPR029016">
    <property type="entry name" value="GAF-like_dom_sf"/>
</dbReference>
<dbReference type="InterPro" id="IPR036890">
    <property type="entry name" value="HATPase_C_sf"/>
</dbReference>
<dbReference type="InterPro" id="IPR005467">
    <property type="entry name" value="His_kinase_dom"/>
</dbReference>
<dbReference type="InterPro" id="IPR003661">
    <property type="entry name" value="HisK_dim/P_dom"/>
</dbReference>
<dbReference type="InterPro" id="IPR000014">
    <property type="entry name" value="PAS"/>
</dbReference>
<dbReference type="InterPro" id="IPR035965">
    <property type="entry name" value="PAS-like_dom_sf"/>
</dbReference>
<dbReference type="InterPro" id="IPR013654">
    <property type="entry name" value="PAS_2"/>
</dbReference>
<dbReference type="InterPro" id="IPR013767">
    <property type="entry name" value="PAS_fold"/>
</dbReference>
<dbReference type="InterPro" id="IPR044767">
    <property type="entry name" value="Phy_HATPase-like"/>
</dbReference>
<dbReference type="InterPro" id="IPR016132">
    <property type="entry name" value="Phyto_chromo_attachment"/>
</dbReference>
<dbReference type="InterPro" id="IPR013516">
    <property type="entry name" value="Phyto_chromo_BS"/>
</dbReference>
<dbReference type="InterPro" id="IPR001294">
    <property type="entry name" value="Phytochrome"/>
</dbReference>
<dbReference type="InterPro" id="IPR012129">
    <property type="entry name" value="Phytochrome_A-E"/>
</dbReference>
<dbReference type="InterPro" id="IPR013515">
    <property type="entry name" value="Phytochrome_cen-reg"/>
</dbReference>
<dbReference type="InterPro" id="IPR043150">
    <property type="entry name" value="Phytochrome_PHY_sf"/>
</dbReference>
<dbReference type="NCBIfam" id="TIGR00229">
    <property type="entry name" value="sensory_box"/>
    <property type="match status" value="1"/>
</dbReference>
<dbReference type="PANTHER" id="PTHR47876">
    <property type="entry name" value="OS08G0260000 PROTEIN"/>
    <property type="match status" value="1"/>
</dbReference>
<dbReference type="PANTHER" id="PTHR47876:SF3">
    <property type="entry name" value="PHYTOCHROME 1"/>
    <property type="match status" value="1"/>
</dbReference>
<dbReference type="Pfam" id="PF01590">
    <property type="entry name" value="GAF"/>
    <property type="match status" value="1"/>
</dbReference>
<dbReference type="Pfam" id="PF02518">
    <property type="entry name" value="HATPase_c"/>
    <property type="match status" value="1"/>
</dbReference>
<dbReference type="Pfam" id="PF00512">
    <property type="entry name" value="HisKA"/>
    <property type="match status" value="1"/>
</dbReference>
<dbReference type="Pfam" id="PF00989">
    <property type="entry name" value="PAS"/>
    <property type="match status" value="2"/>
</dbReference>
<dbReference type="Pfam" id="PF08446">
    <property type="entry name" value="PAS_2"/>
    <property type="match status" value="1"/>
</dbReference>
<dbReference type="Pfam" id="PF00360">
    <property type="entry name" value="PHY"/>
    <property type="match status" value="1"/>
</dbReference>
<dbReference type="PIRSF" id="PIRSF000084">
    <property type="entry name" value="Phytochrome"/>
    <property type="match status" value="1"/>
</dbReference>
<dbReference type="PRINTS" id="PR01033">
    <property type="entry name" value="PHYTOCHROME"/>
</dbReference>
<dbReference type="SMART" id="SM00065">
    <property type="entry name" value="GAF"/>
    <property type="match status" value="1"/>
</dbReference>
<dbReference type="SMART" id="SM00387">
    <property type="entry name" value="HATPase_c"/>
    <property type="match status" value="1"/>
</dbReference>
<dbReference type="SMART" id="SM00388">
    <property type="entry name" value="HisKA"/>
    <property type="match status" value="1"/>
</dbReference>
<dbReference type="SMART" id="SM00091">
    <property type="entry name" value="PAS"/>
    <property type="match status" value="2"/>
</dbReference>
<dbReference type="SUPFAM" id="SSF55874">
    <property type="entry name" value="ATPase domain of HSP90 chaperone/DNA topoisomerase II/histidine kinase"/>
    <property type="match status" value="1"/>
</dbReference>
<dbReference type="SUPFAM" id="SSF55781">
    <property type="entry name" value="GAF domain-like"/>
    <property type="match status" value="2"/>
</dbReference>
<dbReference type="SUPFAM" id="SSF55785">
    <property type="entry name" value="PYP-like sensor domain (PAS domain)"/>
    <property type="match status" value="3"/>
</dbReference>
<dbReference type="PROSITE" id="PS50109">
    <property type="entry name" value="HIS_KIN"/>
    <property type="match status" value="1"/>
</dbReference>
<dbReference type="PROSITE" id="PS50112">
    <property type="entry name" value="PAS"/>
    <property type="match status" value="2"/>
</dbReference>
<dbReference type="PROSITE" id="PS00245">
    <property type="entry name" value="PHYTOCHROME_1"/>
    <property type="match status" value="1"/>
</dbReference>
<dbReference type="PROSITE" id="PS50046">
    <property type="entry name" value="PHYTOCHROME_2"/>
    <property type="match status" value="1"/>
</dbReference>
<sequence>MSTPKKTYSSTSSAKSKAHSVRVAQTTADAALQAVFEKSGDSGDSFDYSKSVSKSTAESLPSGAVTAYLQRMQRGGLTQSFGCMIAVEGTGFRVIAYSENAPEILDLVPQAVPSVGEMDTLRIGTDVRTLFTASSVASLEKAAEAQEMSLLNPITVNCRRSGKQLYAIAHRIDIGIVIDFEAVKTDDHLVSAAGALQSHKLAAKAITRLQALPGGDIGLLCDTVVEEVRELTGYDRVMAYRFHEDEHGEVVAEIRRADLEPYLGLHYPGTDIPQASRFLFMKNKVRIIADCSAPPVKVIQDPTLRQPVSLAGSTLRSPHGCHAQYMGNMGSIASLVMAVIINDNEEDSHGSVQRGRKLWGLVVCHHTSPRTVPFPLRSACGFLMQVFGLQLNMEVELAAQLREKHILRTQTLLCDMLLRDAPIGIVSQIPNIMDLVKCDGAALYYGKRFWLLGTTPTESQIKDIAEWLLEYHKDSTGLSTDSLADANYPAAHLLGDAVCGMAAAKITAKDFLFWFRSHTAKEIKWGGAKHDPGEKDDGRKMHPRSSFKAFLEVVKRRSLPWEDVEMDAIHSLQLILRGSFQDIDDSDTKTMIHARLNDLKLHDMDELSVVANEMVRLIETATAPILAVDSNGMINGWNAKIAQVTGLPVSEAMGRSLVKDLVTDESVAVVERLLYLALRGEEEQNVEIKLKTFGTQTEKGVVILIVNACSSRDVSENVVGVCFVGQDVTGQKMFMDKFTRIQGDYKTIVQNPHPLIPPIFGADEFGYCFEWNPAMEGLTGWKKDEVVGKLLVGEIFGMQMMCCRMKSQDAMTKFMIALNTAMDGQSTDKFTFSFFDREGKYVDVLLSTNKRTNADGVITGVFCFLQIASSELQQALKVQRATEKVAVAKLKELAYIRQEIKNPLCGITFTRQLLEDTDLSDDQQQFLDTSAVCEQQLQKVLNDMDLESIEDGYLELDTAEFEMGTVMNAVISQGMTTSREKGLQIFRETPREINTMRLLGDQIRLQQVLSDFLLNTVRFTPSPEGWVKIKVVPTRKRLGGSVHVVHLEFRVSHPGAGLPEELVLEMYDRGKGMTQEGLGLNMCRKLVRLMNGDVHYVREAMQCYFVVNVELPMAQRDDASSQM</sequence>
<organism>
    <name type="scientific">Physcomitrium patens</name>
    <name type="common">Spreading-leaved earth moss</name>
    <name type="synonym">Physcomitrella patens</name>
    <dbReference type="NCBI Taxonomy" id="3218"/>
    <lineage>
        <taxon>Eukaryota</taxon>
        <taxon>Viridiplantae</taxon>
        <taxon>Streptophyta</taxon>
        <taxon>Embryophyta</taxon>
        <taxon>Bryophyta</taxon>
        <taxon>Bryophytina</taxon>
        <taxon>Bryopsida</taxon>
        <taxon>Funariidae</taxon>
        <taxon>Funariales</taxon>
        <taxon>Funariaceae</taxon>
        <taxon>Physcomitrium</taxon>
    </lineage>
</organism>
<comment type="function">
    <text evidence="5">Regulatory photoreceptor which exists in two forms that are reversibly interconvertible by light: the Pr form that absorbs maximally in the red region of the spectrum and the Pfr form that absorbs maximally in the far-red region. Photoconversion of Pr to Pfr induces an array of morphogenetic responses, whereas reconversion of Pfr to Pr cancels the induction of those responses. Pfr controls the expression of a number of nuclear genes including those encoding the small subunit of ribulose-bisphosphate carboxylase, chlorophyll A/B binding protein, protochlorophyllide reductase, rRNA, etc. It also controls the expression of its own gene(s) in a negative feedback fashion. Mediates chloroplast avoidance movement in cytoplasm.</text>
</comment>
<comment type="subunit">
    <text>Homodimer.</text>
</comment>
<comment type="subcellular location">
    <subcellularLocation>
        <location evidence="5">Cytoplasm</location>
    </subcellularLocation>
</comment>
<comment type="PTM">
    <text evidence="1">Contains one covalently linked phytochromobilin chromophore.</text>
</comment>
<comment type="similarity">
    <text evidence="6">Belongs to the phytochrome family.</text>
</comment>
<name>PHY1_PHYPA</name>
<reference key="1">
    <citation type="journal article" date="1993" name="FEBS Lett.">
        <title>Mosses do express conventional, distantly B-type-related phytochromes. Phytochrome of Physcomitrella patens (Hedw.).</title>
        <authorList>
            <person name="Kolukisaoglu H.U."/>
            <person name="Braun B."/>
            <person name="Martin W.F."/>
            <person name="Schneider-Poetsch H.A.W."/>
        </authorList>
    </citation>
    <scope>NUCLEOTIDE SEQUENCE [MRNA]</scope>
</reference>
<reference key="2">
    <citation type="journal article" date="2007" name="Plant J.">
        <title>Functional analyses of the Physcomitrella patens phytochromes in regulating chloroplast avoidance movement.</title>
        <authorList>
            <person name="Uenaka H."/>
            <person name="Kadota A."/>
        </authorList>
    </citation>
    <scope>NUCLEOTIDE SEQUENCE [MRNA]</scope>
    <scope>FUNCTION</scope>
    <scope>SUBCELLULAR LOCATION</scope>
</reference>
<reference key="3">
    <citation type="journal article" date="2008" name="Science">
        <title>The Physcomitrella genome reveals evolutionary insights into the conquest of land by plants.</title>
        <authorList>
            <person name="Rensing S.A."/>
            <person name="Lang D."/>
            <person name="Zimmer A.D."/>
            <person name="Terry A."/>
            <person name="Salamov A."/>
            <person name="Shapiro H."/>
            <person name="Nishiyama T."/>
            <person name="Perroud P.-F."/>
            <person name="Lindquist E.A."/>
            <person name="Kamisugi Y."/>
            <person name="Tanahashi T."/>
            <person name="Sakakibara K."/>
            <person name="Fujita T."/>
            <person name="Oishi K."/>
            <person name="Shin-I T."/>
            <person name="Kuroki Y."/>
            <person name="Toyoda A."/>
            <person name="Suzuki Y."/>
            <person name="Hashimoto S.-I."/>
            <person name="Yamaguchi K."/>
            <person name="Sugano S."/>
            <person name="Kohara Y."/>
            <person name="Fujiyama A."/>
            <person name="Anterola A."/>
            <person name="Aoki S."/>
            <person name="Ashton N."/>
            <person name="Barbazuk W.B."/>
            <person name="Barker E."/>
            <person name="Bennetzen J.L."/>
            <person name="Blankenship R."/>
            <person name="Cho S.H."/>
            <person name="Dutcher S.K."/>
            <person name="Estelle M."/>
            <person name="Fawcett J.A."/>
            <person name="Gundlach H."/>
            <person name="Hanada K."/>
            <person name="Heyl A."/>
            <person name="Hicks K.A."/>
            <person name="Hughes J."/>
            <person name="Lohr M."/>
            <person name="Mayer K."/>
            <person name="Melkozernov A."/>
            <person name="Murata T."/>
            <person name="Nelson D.R."/>
            <person name="Pils B."/>
            <person name="Prigge M."/>
            <person name="Reiss B."/>
            <person name="Renner T."/>
            <person name="Rombauts S."/>
            <person name="Rushton P.J."/>
            <person name="Sanderfoot A."/>
            <person name="Schween G."/>
            <person name="Shiu S.-H."/>
            <person name="Stueber K."/>
            <person name="Theodoulou F.L."/>
            <person name="Tu H."/>
            <person name="Van de Peer Y."/>
            <person name="Verrier P.J."/>
            <person name="Waters E."/>
            <person name="Wood A."/>
            <person name="Yang L."/>
            <person name="Cove D."/>
            <person name="Cuming A.C."/>
            <person name="Hasebe M."/>
            <person name="Lucas S."/>
            <person name="Mishler B.D."/>
            <person name="Reski R."/>
            <person name="Grigoriev I.V."/>
            <person name="Quatrano R.S."/>
            <person name="Boore J.L."/>
        </authorList>
    </citation>
    <scope>NUCLEOTIDE SEQUENCE [LARGE SCALE GENOMIC DNA]</scope>
    <source>
        <strain>cv. Gransden 2004</strain>
    </source>
</reference>
<accession>P36505</accession>
<accession>A9THP5</accession>
<accession>I7GPR5</accession>
<gene>
    <name type="primary">PHY1</name>
    <name type="ORF">PHYPADRAFT_222399</name>
</gene>
<keyword id="KW-0157">Chromophore</keyword>
<keyword id="KW-0963">Cytoplasm</keyword>
<keyword id="KW-0600">Photoreceptor protein</keyword>
<keyword id="KW-0675">Receptor</keyword>
<keyword id="KW-1185">Reference proteome</keyword>
<keyword id="KW-0677">Repeat</keyword>
<keyword id="KW-0716">Sensory transduction</keyword>
<keyword id="KW-0804">Transcription</keyword>
<keyword id="KW-0805">Transcription regulation</keyword>